<evidence type="ECO:0000250" key="1">
    <source>
        <dbReference type="UniProtKB" id="Q6H3D1"/>
    </source>
</evidence>
<evidence type="ECO:0000269" key="2">
    <source>
    </source>
</evidence>
<evidence type="ECO:0000305" key="3"/>
<evidence type="ECO:0000305" key="4">
    <source>
    </source>
</evidence>
<protein>
    <recommendedName>
        <fullName>Basic phospholipase A2 homolog</fullName>
        <shortName>svPLA2 homolog</shortName>
    </recommendedName>
</protein>
<feature type="chain" id="PRO_0000419076" description="Basic phospholipase A2 homolog">
    <location>
        <begin position="1"/>
        <end position="23" status="greater than"/>
    </location>
</feature>
<feature type="non-terminal residue">
    <location>
        <position position="23"/>
    </location>
</feature>
<name>PA2HC_TRIST</name>
<reference key="1">
    <citation type="journal article" date="2004" name="Biochem. J.">
        <title>Venom phospholipases A2 of bamboo viper (Trimeresurus stejnegeri): molecular characterization, geographic variations and evidence of multiple ancestries.</title>
        <authorList>
            <person name="Tsai I.-H."/>
            <person name="Wang Y.-M."/>
            <person name="Chen Y.-H."/>
            <person name="Tsai T.-S."/>
            <person name="Tu M.-C."/>
        </authorList>
    </citation>
    <scope>PROTEIN SEQUENCE</scope>
    <scope>MASS SPECTROMETRY</scope>
    <scope>SUBCELLULAR LOCATION</scope>
    <source>
        <strain>Taiwan</strain>
        <tissue>Venom</tissue>
        <tissue>Venom gland</tissue>
    </source>
</reference>
<accession>P0DJQ1</accession>
<organism>
    <name type="scientific">Trimeresurus stejnegeri</name>
    <name type="common">Chinese green tree viper</name>
    <name type="synonym">Viridovipera stejnegeri</name>
    <dbReference type="NCBI Taxonomy" id="39682"/>
    <lineage>
        <taxon>Eukaryota</taxon>
        <taxon>Metazoa</taxon>
        <taxon>Chordata</taxon>
        <taxon>Craniata</taxon>
        <taxon>Vertebrata</taxon>
        <taxon>Euteleostomi</taxon>
        <taxon>Lepidosauria</taxon>
        <taxon>Squamata</taxon>
        <taxon>Bifurcata</taxon>
        <taxon>Unidentata</taxon>
        <taxon>Episquamata</taxon>
        <taxon>Toxicofera</taxon>
        <taxon>Serpentes</taxon>
        <taxon>Colubroidea</taxon>
        <taxon>Viperidae</taxon>
        <taxon>Crotalinae</taxon>
        <taxon>Trimeresurus</taxon>
    </lineage>
</organism>
<keyword id="KW-0903">Direct protein sequencing</keyword>
<keyword id="KW-1015">Disulfide bond</keyword>
<keyword id="KW-0964">Secreted</keyword>
<keyword id="KW-0800">Toxin</keyword>
<sequence length="23" mass="2526">GVIELTKMIVQEMGKNALTSYSL</sequence>
<dbReference type="GO" id="GO:0005576">
    <property type="term" value="C:extracellular region"/>
    <property type="evidence" value="ECO:0007669"/>
    <property type="project" value="UniProtKB-SubCell"/>
</dbReference>
<dbReference type="GO" id="GO:0090729">
    <property type="term" value="F:toxin activity"/>
    <property type="evidence" value="ECO:0007669"/>
    <property type="project" value="UniProtKB-KW"/>
</dbReference>
<proteinExistence type="evidence at protein level"/>
<comment type="subcellular location">
    <subcellularLocation>
        <location evidence="2">Secreted</location>
    </subcellularLocation>
</comment>
<comment type="tissue specificity">
    <text evidence="4">Expressed by the venom gland.</text>
</comment>
<comment type="PTM">
    <text evidence="1">Contains 7 disulfide bonds.</text>
</comment>
<comment type="mass spectrometry" mass="13917.0" method="Electrospray" evidence="2"/>
<comment type="similarity">
    <text evidence="3">Belongs to the phospholipase A2 family. Group II subfamily.</text>
</comment>
<comment type="caution">
    <text evidence="3">According to PubMed:12959640, T.stejnegeri was formerly named T.gramineus, supposing that this protein is the same as PLA-VII from T.gramineus. They have been kept separated, because T.gramineus and T.stejnegeri are considered as being two different species (see http://reptile-database.org).</text>
</comment>